<protein>
    <recommendedName>
        <fullName>Nickel-responsive regulator</fullName>
    </recommendedName>
</protein>
<keyword id="KW-0238">DNA-binding</keyword>
<keyword id="KW-0479">Metal-binding</keyword>
<keyword id="KW-0533">Nickel</keyword>
<keyword id="KW-1185">Reference proteome</keyword>
<keyword id="KW-0678">Repressor</keyword>
<keyword id="KW-0804">Transcription</keyword>
<keyword id="KW-0805">Transcription regulation</keyword>
<proteinExistence type="inferred from homology"/>
<evidence type="ECO:0000250" key="1"/>
<evidence type="ECO:0000305" key="2"/>
<gene>
    <name type="primary">nikR</name>
    <name type="ordered locus">c4274</name>
</gene>
<name>NIKR_ECOL6</name>
<sequence>MQRVTITLDDDLLETLDSLSQRRGYNNRSEAIRDILRSALAQEATQQHGTQGFAVLSYVYEHEKRDLASRIVSTQHHHHDLSVATLHVHINHDDCLEIAVLKGDMGDVQHFADDVIAQRGVRHGHLQCLPKED</sequence>
<comment type="function">
    <text evidence="1">Transcriptional repressor of the nikABCDE operon. Is active in the presence of excessive concentrations of intracellular nickel (By similarity).</text>
</comment>
<comment type="cofactor">
    <cofactor evidence="1">
        <name>Ni(2+)</name>
        <dbReference type="ChEBI" id="CHEBI:49786"/>
    </cofactor>
    <text evidence="1">Binds 1 nickel ion per subunit.</text>
</comment>
<comment type="subunit">
    <text evidence="1">Homotetramer.</text>
</comment>
<comment type="similarity">
    <text evidence="2">Belongs to the transcriptional regulatory CopG/NikR family.</text>
</comment>
<feature type="chain" id="PRO_0000139276" description="Nickel-responsive regulator">
    <location>
        <begin position="1"/>
        <end position="133"/>
    </location>
</feature>
<feature type="binding site" evidence="1">
    <location>
        <position position="76"/>
    </location>
    <ligand>
        <name>Ni(2+)</name>
        <dbReference type="ChEBI" id="CHEBI:49786"/>
    </ligand>
</feature>
<feature type="binding site" evidence="1">
    <location>
        <position position="87"/>
    </location>
    <ligand>
        <name>Ni(2+)</name>
        <dbReference type="ChEBI" id="CHEBI:49786"/>
    </ligand>
</feature>
<feature type="binding site" evidence="1">
    <location>
        <position position="89"/>
    </location>
    <ligand>
        <name>Ni(2+)</name>
        <dbReference type="ChEBI" id="CHEBI:49786"/>
    </ligand>
</feature>
<feature type="binding site" evidence="1">
    <location>
        <position position="95"/>
    </location>
    <ligand>
        <name>Ni(2+)</name>
        <dbReference type="ChEBI" id="CHEBI:49786"/>
    </ligand>
</feature>
<dbReference type="EMBL" id="AE014075">
    <property type="protein sequence ID" value="AAN82710.1"/>
    <property type="molecule type" value="Genomic_DNA"/>
</dbReference>
<dbReference type="RefSeq" id="WP_001190062.1">
    <property type="nucleotide sequence ID" value="NZ_CP051263.1"/>
</dbReference>
<dbReference type="SMR" id="P0A6Z7"/>
<dbReference type="STRING" id="199310.c4274"/>
<dbReference type="GeneID" id="93778510"/>
<dbReference type="KEGG" id="ecc:c4274"/>
<dbReference type="eggNOG" id="COG0864">
    <property type="taxonomic scope" value="Bacteria"/>
</dbReference>
<dbReference type="HOGENOM" id="CLU_113319_1_4_6"/>
<dbReference type="BioCyc" id="ECOL199310:C4274-MONOMER"/>
<dbReference type="Proteomes" id="UP000001410">
    <property type="component" value="Chromosome"/>
</dbReference>
<dbReference type="GO" id="GO:0003700">
    <property type="term" value="F:DNA-binding transcription factor activity"/>
    <property type="evidence" value="ECO:0007669"/>
    <property type="project" value="UniProtKB-UniRule"/>
</dbReference>
<dbReference type="GO" id="GO:0016151">
    <property type="term" value="F:nickel cation binding"/>
    <property type="evidence" value="ECO:0007669"/>
    <property type="project" value="UniProtKB-UniRule"/>
</dbReference>
<dbReference type="GO" id="GO:0043565">
    <property type="term" value="F:sequence-specific DNA binding"/>
    <property type="evidence" value="ECO:0007669"/>
    <property type="project" value="UniProtKB-ARBA"/>
</dbReference>
<dbReference type="GO" id="GO:0010045">
    <property type="term" value="P:response to nickel cation"/>
    <property type="evidence" value="ECO:0007669"/>
    <property type="project" value="InterPro"/>
</dbReference>
<dbReference type="CDD" id="cd22231">
    <property type="entry name" value="RHH_NikR_HicB-like"/>
    <property type="match status" value="1"/>
</dbReference>
<dbReference type="FunFam" id="1.10.1220.10:FF:000001">
    <property type="entry name" value="Nickel-responsive regulator"/>
    <property type="match status" value="1"/>
</dbReference>
<dbReference type="FunFam" id="3.30.70.1150:FF:000002">
    <property type="entry name" value="Nickel-responsive regulator"/>
    <property type="match status" value="1"/>
</dbReference>
<dbReference type="Gene3D" id="3.30.70.1150">
    <property type="entry name" value="ACT-like. Chain A, domain 2"/>
    <property type="match status" value="1"/>
</dbReference>
<dbReference type="Gene3D" id="1.10.1220.10">
    <property type="entry name" value="Met repressor-like"/>
    <property type="match status" value="1"/>
</dbReference>
<dbReference type="HAMAP" id="MF_00476">
    <property type="entry name" value="NikR"/>
    <property type="match status" value="1"/>
</dbReference>
<dbReference type="InterPro" id="IPR027271">
    <property type="entry name" value="Acetolactate_synth/TF_NikR_C"/>
</dbReference>
<dbReference type="InterPro" id="IPR045865">
    <property type="entry name" value="ACT-like_dom_sf"/>
</dbReference>
<dbReference type="InterPro" id="IPR013321">
    <property type="entry name" value="Arc_rbn_hlx_hlx"/>
</dbReference>
<dbReference type="InterPro" id="IPR002145">
    <property type="entry name" value="CopG"/>
</dbReference>
<dbReference type="InterPro" id="IPR050192">
    <property type="entry name" value="CopG/NikR_regulator"/>
</dbReference>
<dbReference type="InterPro" id="IPR022988">
    <property type="entry name" value="Ni_resp_reg_NikR"/>
</dbReference>
<dbReference type="InterPro" id="IPR014160">
    <property type="entry name" value="Nickel_NikR_proteobac"/>
</dbReference>
<dbReference type="InterPro" id="IPR010985">
    <property type="entry name" value="Ribbon_hlx_hlx"/>
</dbReference>
<dbReference type="InterPro" id="IPR014864">
    <property type="entry name" value="TF_NikR_Ni-bd_C"/>
</dbReference>
<dbReference type="NCBIfam" id="TIGR02793">
    <property type="entry name" value="nikR"/>
    <property type="match status" value="1"/>
</dbReference>
<dbReference type="NCBIfam" id="NF002815">
    <property type="entry name" value="PRK02967.1"/>
    <property type="match status" value="1"/>
</dbReference>
<dbReference type="NCBIfam" id="NF003381">
    <property type="entry name" value="PRK04460.1"/>
    <property type="match status" value="1"/>
</dbReference>
<dbReference type="PANTHER" id="PTHR34719">
    <property type="entry name" value="NICKEL-RESPONSIVE REGULATOR"/>
    <property type="match status" value="1"/>
</dbReference>
<dbReference type="PANTHER" id="PTHR34719:SF2">
    <property type="entry name" value="NICKEL-RESPONSIVE REGULATOR"/>
    <property type="match status" value="1"/>
</dbReference>
<dbReference type="Pfam" id="PF08753">
    <property type="entry name" value="NikR_C"/>
    <property type="match status" value="1"/>
</dbReference>
<dbReference type="Pfam" id="PF01402">
    <property type="entry name" value="RHH_1"/>
    <property type="match status" value="1"/>
</dbReference>
<dbReference type="SUPFAM" id="SSF55021">
    <property type="entry name" value="ACT-like"/>
    <property type="match status" value="1"/>
</dbReference>
<dbReference type="SUPFAM" id="SSF47598">
    <property type="entry name" value="Ribbon-helix-helix"/>
    <property type="match status" value="1"/>
</dbReference>
<organism>
    <name type="scientific">Escherichia coli O6:H1 (strain CFT073 / ATCC 700928 / UPEC)</name>
    <dbReference type="NCBI Taxonomy" id="199310"/>
    <lineage>
        <taxon>Bacteria</taxon>
        <taxon>Pseudomonadati</taxon>
        <taxon>Pseudomonadota</taxon>
        <taxon>Gammaproteobacteria</taxon>
        <taxon>Enterobacterales</taxon>
        <taxon>Enterobacteriaceae</taxon>
        <taxon>Escherichia</taxon>
    </lineage>
</organism>
<reference key="1">
    <citation type="journal article" date="2002" name="Proc. Natl. Acad. Sci. U.S.A.">
        <title>Extensive mosaic structure revealed by the complete genome sequence of uropathogenic Escherichia coli.</title>
        <authorList>
            <person name="Welch R.A."/>
            <person name="Burland V."/>
            <person name="Plunkett G. III"/>
            <person name="Redford P."/>
            <person name="Roesch P."/>
            <person name="Rasko D."/>
            <person name="Buckles E.L."/>
            <person name="Liou S.-R."/>
            <person name="Boutin A."/>
            <person name="Hackett J."/>
            <person name="Stroud D."/>
            <person name="Mayhew G.F."/>
            <person name="Rose D.J."/>
            <person name="Zhou S."/>
            <person name="Schwartz D.C."/>
            <person name="Perna N.T."/>
            <person name="Mobley H.L.T."/>
            <person name="Donnenberg M.S."/>
            <person name="Blattner F.R."/>
        </authorList>
    </citation>
    <scope>NUCLEOTIDE SEQUENCE [LARGE SCALE GENOMIC DNA]</scope>
    <source>
        <strain>CFT073 / ATCC 700928 / UPEC</strain>
    </source>
</reference>
<accession>P0A6Z7</accession>
<accession>P28910</accession>
<accession>Q47559</accession>